<organism>
    <name type="scientific">Acinetobacter baumannii (strain AB0057)</name>
    <dbReference type="NCBI Taxonomy" id="480119"/>
    <lineage>
        <taxon>Bacteria</taxon>
        <taxon>Pseudomonadati</taxon>
        <taxon>Pseudomonadota</taxon>
        <taxon>Gammaproteobacteria</taxon>
        <taxon>Moraxellales</taxon>
        <taxon>Moraxellaceae</taxon>
        <taxon>Acinetobacter</taxon>
        <taxon>Acinetobacter calcoaceticus/baumannii complex</taxon>
    </lineage>
</organism>
<feature type="chain" id="PRO_1000198946" description="Aspartate--tRNA(Asp/Asn) ligase">
    <location>
        <begin position="1"/>
        <end position="592"/>
    </location>
</feature>
<feature type="region of interest" description="Aspartate" evidence="1">
    <location>
        <begin position="199"/>
        <end position="202"/>
    </location>
</feature>
<feature type="binding site" evidence="1">
    <location>
        <position position="175"/>
    </location>
    <ligand>
        <name>L-aspartate</name>
        <dbReference type="ChEBI" id="CHEBI:29991"/>
    </ligand>
</feature>
<feature type="binding site" evidence="1">
    <location>
        <begin position="221"/>
        <end position="223"/>
    </location>
    <ligand>
        <name>ATP</name>
        <dbReference type="ChEBI" id="CHEBI:30616"/>
    </ligand>
</feature>
<feature type="binding site" evidence="1">
    <location>
        <position position="221"/>
    </location>
    <ligand>
        <name>L-aspartate</name>
        <dbReference type="ChEBI" id="CHEBI:29991"/>
    </ligand>
</feature>
<feature type="binding site" evidence="1">
    <location>
        <position position="230"/>
    </location>
    <ligand>
        <name>ATP</name>
        <dbReference type="ChEBI" id="CHEBI:30616"/>
    </ligand>
</feature>
<feature type="binding site" evidence="1">
    <location>
        <position position="450"/>
    </location>
    <ligand>
        <name>L-aspartate</name>
        <dbReference type="ChEBI" id="CHEBI:29991"/>
    </ligand>
</feature>
<feature type="binding site" evidence="1">
    <location>
        <position position="483"/>
    </location>
    <ligand>
        <name>ATP</name>
        <dbReference type="ChEBI" id="CHEBI:30616"/>
    </ligand>
</feature>
<feature type="binding site" evidence="1">
    <location>
        <position position="490"/>
    </location>
    <ligand>
        <name>L-aspartate</name>
        <dbReference type="ChEBI" id="CHEBI:29991"/>
    </ligand>
</feature>
<feature type="binding site" evidence="1">
    <location>
        <begin position="535"/>
        <end position="538"/>
    </location>
    <ligand>
        <name>ATP</name>
        <dbReference type="ChEBI" id="CHEBI:30616"/>
    </ligand>
</feature>
<feature type="site" description="Important for tRNA non-discrimination" evidence="1">
    <location>
        <position position="31"/>
    </location>
</feature>
<feature type="site" description="Important for tRNA non-discrimination" evidence="1">
    <location>
        <position position="82"/>
    </location>
</feature>
<keyword id="KW-0030">Aminoacyl-tRNA synthetase</keyword>
<keyword id="KW-0067">ATP-binding</keyword>
<keyword id="KW-0963">Cytoplasm</keyword>
<keyword id="KW-0436">Ligase</keyword>
<keyword id="KW-0547">Nucleotide-binding</keyword>
<keyword id="KW-0648">Protein biosynthesis</keyword>
<comment type="function">
    <text evidence="1">Aspartyl-tRNA synthetase with relaxed tRNA specificity since it is able to aspartylate not only its cognate tRNA(Asp) but also tRNA(Asn). Reaction proceeds in two steps: L-aspartate is first activated by ATP to form Asp-AMP and then transferred to the acceptor end of tRNA(Asp/Asn).</text>
</comment>
<comment type="catalytic activity">
    <reaction evidence="1">
        <text>tRNA(Asx) + L-aspartate + ATP = L-aspartyl-tRNA(Asx) + AMP + diphosphate</text>
        <dbReference type="Rhea" id="RHEA:18349"/>
        <dbReference type="Rhea" id="RHEA-COMP:9710"/>
        <dbReference type="Rhea" id="RHEA-COMP:9711"/>
        <dbReference type="ChEBI" id="CHEBI:29991"/>
        <dbReference type="ChEBI" id="CHEBI:30616"/>
        <dbReference type="ChEBI" id="CHEBI:33019"/>
        <dbReference type="ChEBI" id="CHEBI:78442"/>
        <dbReference type="ChEBI" id="CHEBI:78516"/>
        <dbReference type="ChEBI" id="CHEBI:456215"/>
        <dbReference type="EC" id="6.1.1.23"/>
    </reaction>
</comment>
<comment type="subunit">
    <text evidence="1">Homodimer.</text>
</comment>
<comment type="subcellular location">
    <subcellularLocation>
        <location evidence="1">Cytoplasm</location>
    </subcellularLocation>
</comment>
<comment type="similarity">
    <text evidence="1">Belongs to the class-II aminoacyl-tRNA synthetase family. Type 1 subfamily.</text>
</comment>
<accession>B7I8M5</accession>
<gene>
    <name evidence="1" type="primary">aspS</name>
    <name type="ordered locus">AB57_3398</name>
</gene>
<evidence type="ECO:0000255" key="1">
    <source>
        <dbReference type="HAMAP-Rule" id="MF_00044"/>
    </source>
</evidence>
<sequence>MMRTHYCGSLTEAQIDQTVTLCGWVHRRRDHGGVIFLDMRDRDGLVQVVIDPDTPEAFATADKARSEYVLKITGRVRRRYEGTENPNMVSGQIEVLGKEIEVLAASETPPFPLNDDTINVSEEHRLKYRFLDIRRPEMLERLRFRSKVTNLIRNYLDDHGFLDVETPILTRATPEGARDYLVPSRVQNGSFYALPQSPQLFKQLLMVGGIDRYYQIAKCFRDEDLRADRQPEFTQIDIETSFLNDDDIMDLMEGMTVKLFNDLLGVKFEKFRRMPYSEAMRDYASDKPDLRIPLKLVDVADLMQEVEFKVFAGPAKDPKGRIAALRVPGAGSLTRSQIDEYTKFVGIYGAKGLAYIKVNEIEKGIEGLQSPIVKFIEPIVMQLLERVGAENGDIVFFGADKAKIVNDAMGALRVKIGHDLNLATCEWAPLWVVDFPMFEETDDGKWTSVHHPFTLPKSSVEDVKSNPGEALSVAYDMVLNGTEVGGGSLRIYTLEMQKAIFEALGISDEEAEEKFSFLLNALRYGAPPHGGLAFGLDRLVMLMTGATSIRDVIAFPKTKTAECPLTQAPAPVEANQLRDLGIRLREQQKKEA</sequence>
<reference key="1">
    <citation type="journal article" date="2008" name="J. Bacteriol.">
        <title>Comparative genome sequence analysis of multidrug-resistant Acinetobacter baumannii.</title>
        <authorList>
            <person name="Adams M.D."/>
            <person name="Goglin K."/>
            <person name="Molyneaux N."/>
            <person name="Hujer K.M."/>
            <person name="Lavender H."/>
            <person name="Jamison J.J."/>
            <person name="MacDonald I.J."/>
            <person name="Martin K.M."/>
            <person name="Russo T."/>
            <person name="Campagnari A.A."/>
            <person name="Hujer A.M."/>
            <person name="Bonomo R.A."/>
            <person name="Gill S.R."/>
        </authorList>
    </citation>
    <scope>NUCLEOTIDE SEQUENCE [LARGE SCALE GENOMIC DNA]</scope>
    <source>
        <strain>AB0057</strain>
    </source>
</reference>
<dbReference type="EC" id="6.1.1.23" evidence="1"/>
<dbReference type="EMBL" id="CP001182">
    <property type="protein sequence ID" value="ACJ41968.1"/>
    <property type="molecule type" value="Genomic_DNA"/>
</dbReference>
<dbReference type="RefSeq" id="WP_000986451.1">
    <property type="nucleotide sequence ID" value="NC_011586.2"/>
</dbReference>
<dbReference type="SMR" id="B7I8M5"/>
<dbReference type="GeneID" id="92895173"/>
<dbReference type="KEGG" id="abn:AB57_3398"/>
<dbReference type="HOGENOM" id="CLU_014330_3_2_6"/>
<dbReference type="Proteomes" id="UP000007094">
    <property type="component" value="Chromosome"/>
</dbReference>
<dbReference type="GO" id="GO:0005737">
    <property type="term" value="C:cytoplasm"/>
    <property type="evidence" value="ECO:0007669"/>
    <property type="project" value="UniProtKB-SubCell"/>
</dbReference>
<dbReference type="GO" id="GO:0004815">
    <property type="term" value="F:aspartate-tRNA ligase activity"/>
    <property type="evidence" value="ECO:0007669"/>
    <property type="project" value="UniProtKB-UniRule"/>
</dbReference>
<dbReference type="GO" id="GO:0050560">
    <property type="term" value="F:aspartate-tRNA(Asn) ligase activity"/>
    <property type="evidence" value="ECO:0007669"/>
    <property type="project" value="UniProtKB-EC"/>
</dbReference>
<dbReference type="GO" id="GO:0005524">
    <property type="term" value="F:ATP binding"/>
    <property type="evidence" value="ECO:0007669"/>
    <property type="project" value="UniProtKB-UniRule"/>
</dbReference>
<dbReference type="GO" id="GO:0003676">
    <property type="term" value="F:nucleic acid binding"/>
    <property type="evidence" value="ECO:0007669"/>
    <property type="project" value="InterPro"/>
</dbReference>
<dbReference type="GO" id="GO:0006422">
    <property type="term" value="P:aspartyl-tRNA aminoacylation"/>
    <property type="evidence" value="ECO:0007669"/>
    <property type="project" value="UniProtKB-UniRule"/>
</dbReference>
<dbReference type="CDD" id="cd00777">
    <property type="entry name" value="AspRS_core"/>
    <property type="match status" value="1"/>
</dbReference>
<dbReference type="CDD" id="cd04317">
    <property type="entry name" value="EcAspRS_like_N"/>
    <property type="match status" value="1"/>
</dbReference>
<dbReference type="Gene3D" id="3.30.930.10">
    <property type="entry name" value="Bira Bifunctional Protein, Domain 2"/>
    <property type="match status" value="1"/>
</dbReference>
<dbReference type="Gene3D" id="3.30.1360.30">
    <property type="entry name" value="GAD-like domain"/>
    <property type="match status" value="1"/>
</dbReference>
<dbReference type="Gene3D" id="2.40.50.140">
    <property type="entry name" value="Nucleic acid-binding proteins"/>
    <property type="match status" value="1"/>
</dbReference>
<dbReference type="HAMAP" id="MF_00044">
    <property type="entry name" value="Asp_tRNA_synth_type1"/>
    <property type="match status" value="1"/>
</dbReference>
<dbReference type="InterPro" id="IPR004364">
    <property type="entry name" value="Aa-tRNA-synt_II"/>
</dbReference>
<dbReference type="InterPro" id="IPR006195">
    <property type="entry name" value="aa-tRNA-synth_II"/>
</dbReference>
<dbReference type="InterPro" id="IPR045864">
    <property type="entry name" value="aa-tRNA-synth_II/BPL/LPL"/>
</dbReference>
<dbReference type="InterPro" id="IPR004524">
    <property type="entry name" value="Asp-tRNA-ligase_1"/>
</dbReference>
<dbReference type="InterPro" id="IPR047089">
    <property type="entry name" value="Asp-tRNA-ligase_1_N"/>
</dbReference>
<dbReference type="InterPro" id="IPR002312">
    <property type="entry name" value="Asp/Asn-tRNA-synth_IIb"/>
</dbReference>
<dbReference type="InterPro" id="IPR047090">
    <property type="entry name" value="AspRS_core"/>
</dbReference>
<dbReference type="InterPro" id="IPR004115">
    <property type="entry name" value="GAD-like_sf"/>
</dbReference>
<dbReference type="InterPro" id="IPR029351">
    <property type="entry name" value="GAD_dom"/>
</dbReference>
<dbReference type="InterPro" id="IPR012340">
    <property type="entry name" value="NA-bd_OB-fold"/>
</dbReference>
<dbReference type="InterPro" id="IPR004365">
    <property type="entry name" value="NA-bd_OB_tRNA"/>
</dbReference>
<dbReference type="NCBIfam" id="TIGR00459">
    <property type="entry name" value="aspS_bact"/>
    <property type="match status" value="1"/>
</dbReference>
<dbReference type="NCBIfam" id="NF001750">
    <property type="entry name" value="PRK00476.1"/>
    <property type="match status" value="1"/>
</dbReference>
<dbReference type="PANTHER" id="PTHR22594:SF5">
    <property type="entry name" value="ASPARTATE--TRNA LIGASE, MITOCHONDRIAL"/>
    <property type="match status" value="1"/>
</dbReference>
<dbReference type="PANTHER" id="PTHR22594">
    <property type="entry name" value="ASPARTYL/LYSYL-TRNA SYNTHETASE"/>
    <property type="match status" value="1"/>
</dbReference>
<dbReference type="Pfam" id="PF02938">
    <property type="entry name" value="GAD"/>
    <property type="match status" value="1"/>
</dbReference>
<dbReference type="Pfam" id="PF00152">
    <property type="entry name" value="tRNA-synt_2"/>
    <property type="match status" value="1"/>
</dbReference>
<dbReference type="Pfam" id="PF01336">
    <property type="entry name" value="tRNA_anti-codon"/>
    <property type="match status" value="1"/>
</dbReference>
<dbReference type="PRINTS" id="PR01042">
    <property type="entry name" value="TRNASYNTHASP"/>
</dbReference>
<dbReference type="SUPFAM" id="SSF55681">
    <property type="entry name" value="Class II aaRS and biotin synthetases"/>
    <property type="match status" value="1"/>
</dbReference>
<dbReference type="SUPFAM" id="SSF55261">
    <property type="entry name" value="GAD domain-like"/>
    <property type="match status" value="1"/>
</dbReference>
<dbReference type="SUPFAM" id="SSF50249">
    <property type="entry name" value="Nucleic acid-binding proteins"/>
    <property type="match status" value="1"/>
</dbReference>
<dbReference type="PROSITE" id="PS50862">
    <property type="entry name" value="AA_TRNA_LIGASE_II"/>
    <property type="match status" value="1"/>
</dbReference>
<proteinExistence type="inferred from homology"/>
<name>SYDND_ACIB5</name>
<protein>
    <recommendedName>
        <fullName evidence="1">Aspartate--tRNA(Asp/Asn) ligase</fullName>
        <ecNumber evidence="1">6.1.1.23</ecNumber>
    </recommendedName>
    <alternativeName>
        <fullName evidence="1">Aspartyl-tRNA synthetase</fullName>
        <shortName evidence="1">AspRS</shortName>
    </alternativeName>
    <alternativeName>
        <fullName evidence="1">Non-discriminating aspartyl-tRNA synthetase</fullName>
        <shortName evidence="1">ND-AspRS</shortName>
    </alternativeName>
</protein>